<protein>
    <recommendedName>
        <fullName evidence="1">Putative pterin-4-alpha-carbinolamine dehydratase</fullName>
        <shortName evidence="1">PHS</shortName>
        <ecNumber evidence="1">4.2.1.96</ecNumber>
    </recommendedName>
    <alternativeName>
        <fullName evidence="1">4-alpha-hydroxy-tetrahydropterin dehydratase</fullName>
    </alternativeName>
    <alternativeName>
        <fullName evidence="1">Pterin carbinolamine dehydratase</fullName>
        <shortName evidence="1">PCD</shortName>
    </alternativeName>
</protein>
<feature type="chain" id="PRO_1000050458" description="Putative pterin-4-alpha-carbinolamine dehydratase">
    <location>
        <begin position="1"/>
        <end position="112"/>
    </location>
</feature>
<sequence>MTVLSDMKCEACQADAPKVTDEELAELVRMIPDWSVQVRDGIMQLERVYKFKNFKLAMAFTNKLAELAEEEFHHPGIFTEWGKVTVTWWSHSIKGLHRNDFIMAAKTDQLLG</sequence>
<accession>A4Y581</accession>
<keyword id="KW-0456">Lyase</keyword>
<proteinExistence type="inferred from homology"/>
<evidence type="ECO:0000255" key="1">
    <source>
        <dbReference type="HAMAP-Rule" id="MF_00434"/>
    </source>
</evidence>
<organism>
    <name type="scientific">Shewanella putrefaciens (strain CN-32 / ATCC BAA-453)</name>
    <dbReference type="NCBI Taxonomy" id="319224"/>
    <lineage>
        <taxon>Bacteria</taxon>
        <taxon>Pseudomonadati</taxon>
        <taxon>Pseudomonadota</taxon>
        <taxon>Gammaproteobacteria</taxon>
        <taxon>Alteromonadales</taxon>
        <taxon>Shewanellaceae</taxon>
        <taxon>Shewanella</taxon>
    </lineage>
</organism>
<reference key="1">
    <citation type="submission" date="2007-04" db="EMBL/GenBank/DDBJ databases">
        <title>Complete sequence of Shewanella putrefaciens CN-32.</title>
        <authorList>
            <consortium name="US DOE Joint Genome Institute"/>
            <person name="Copeland A."/>
            <person name="Lucas S."/>
            <person name="Lapidus A."/>
            <person name="Barry K."/>
            <person name="Detter J.C."/>
            <person name="Glavina del Rio T."/>
            <person name="Hammon N."/>
            <person name="Israni S."/>
            <person name="Dalin E."/>
            <person name="Tice H."/>
            <person name="Pitluck S."/>
            <person name="Chain P."/>
            <person name="Malfatti S."/>
            <person name="Shin M."/>
            <person name="Vergez L."/>
            <person name="Schmutz J."/>
            <person name="Larimer F."/>
            <person name="Land M."/>
            <person name="Hauser L."/>
            <person name="Kyrpides N."/>
            <person name="Mikhailova N."/>
            <person name="Romine M.F."/>
            <person name="Fredrickson J."/>
            <person name="Tiedje J."/>
            <person name="Richardson P."/>
        </authorList>
    </citation>
    <scope>NUCLEOTIDE SEQUENCE [LARGE SCALE GENOMIC DNA]</scope>
    <source>
        <strain>CN-32 / ATCC BAA-453</strain>
    </source>
</reference>
<gene>
    <name type="ordered locus">Sputcn32_1387</name>
</gene>
<comment type="catalytic activity">
    <reaction evidence="1">
        <text>(4aS,6R)-4a-hydroxy-L-erythro-5,6,7,8-tetrahydrobiopterin = (6R)-L-erythro-6,7-dihydrobiopterin + H2O</text>
        <dbReference type="Rhea" id="RHEA:11920"/>
        <dbReference type="ChEBI" id="CHEBI:15377"/>
        <dbReference type="ChEBI" id="CHEBI:15642"/>
        <dbReference type="ChEBI" id="CHEBI:43120"/>
        <dbReference type="EC" id="4.2.1.96"/>
    </reaction>
</comment>
<comment type="similarity">
    <text evidence="1">Belongs to the pterin-4-alpha-carbinolamine dehydratase family.</text>
</comment>
<dbReference type="EC" id="4.2.1.96" evidence="1"/>
<dbReference type="EMBL" id="CP000681">
    <property type="protein sequence ID" value="ABP75114.1"/>
    <property type="molecule type" value="Genomic_DNA"/>
</dbReference>
<dbReference type="SMR" id="A4Y581"/>
<dbReference type="STRING" id="319224.Sputcn32_1387"/>
<dbReference type="KEGG" id="spc:Sputcn32_1387"/>
<dbReference type="eggNOG" id="COG2154">
    <property type="taxonomic scope" value="Bacteria"/>
</dbReference>
<dbReference type="HOGENOM" id="CLU_081974_2_2_6"/>
<dbReference type="GO" id="GO:0008124">
    <property type="term" value="F:4-alpha-hydroxytetrahydrobiopterin dehydratase activity"/>
    <property type="evidence" value="ECO:0007669"/>
    <property type="project" value="UniProtKB-UniRule"/>
</dbReference>
<dbReference type="GO" id="GO:0006729">
    <property type="term" value="P:tetrahydrobiopterin biosynthetic process"/>
    <property type="evidence" value="ECO:0007669"/>
    <property type="project" value="InterPro"/>
</dbReference>
<dbReference type="CDD" id="cd00913">
    <property type="entry name" value="PCD_DCoH_subfamily_a"/>
    <property type="match status" value="1"/>
</dbReference>
<dbReference type="Gene3D" id="3.30.1360.20">
    <property type="entry name" value="Transcriptional coactivator/pterin dehydratase"/>
    <property type="match status" value="1"/>
</dbReference>
<dbReference type="HAMAP" id="MF_00434">
    <property type="entry name" value="Pterin_4_alpha"/>
    <property type="match status" value="1"/>
</dbReference>
<dbReference type="InterPro" id="IPR036428">
    <property type="entry name" value="PCD_sf"/>
</dbReference>
<dbReference type="InterPro" id="IPR050376">
    <property type="entry name" value="Pterin-4-alpha-carb_dehyd"/>
</dbReference>
<dbReference type="InterPro" id="IPR001533">
    <property type="entry name" value="Pterin_deHydtase"/>
</dbReference>
<dbReference type="NCBIfam" id="NF002016">
    <property type="entry name" value="PRK00823.1-1"/>
    <property type="match status" value="1"/>
</dbReference>
<dbReference type="PANTHER" id="PTHR42805">
    <property type="entry name" value="PTERIN-4-ALPHA-CARBINOLAMINE DEHYDRATASE-RELATED"/>
    <property type="match status" value="1"/>
</dbReference>
<dbReference type="PANTHER" id="PTHR42805:SF1">
    <property type="entry name" value="PTERIN-4-ALPHA-CARBINOLAMINE DEHYDRATASE-RELATED"/>
    <property type="match status" value="1"/>
</dbReference>
<dbReference type="Pfam" id="PF01329">
    <property type="entry name" value="Pterin_4a"/>
    <property type="match status" value="1"/>
</dbReference>
<dbReference type="SUPFAM" id="SSF55248">
    <property type="entry name" value="PCD-like"/>
    <property type="match status" value="1"/>
</dbReference>
<name>PHS_SHEPC</name>